<dbReference type="EC" id="3.1.1.96" evidence="1"/>
<dbReference type="EMBL" id="CP001404">
    <property type="protein sequence ID" value="ACP47251.1"/>
    <property type="molecule type" value="Genomic_DNA"/>
</dbReference>
<dbReference type="RefSeq" id="WP_012710231.1">
    <property type="nucleotide sequence ID" value="NC_012623.1"/>
</dbReference>
<dbReference type="SMR" id="C3NJ84"/>
<dbReference type="KEGG" id="sin:YN1551_0052"/>
<dbReference type="HOGENOM" id="CLU_056464_1_0_2"/>
<dbReference type="Proteomes" id="UP000006818">
    <property type="component" value="Chromosome"/>
</dbReference>
<dbReference type="GO" id="GO:0051499">
    <property type="term" value="F:D-aminoacyl-tRNA deacylase activity"/>
    <property type="evidence" value="ECO:0007669"/>
    <property type="project" value="UniProtKB-UniRule"/>
</dbReference>
<dbReference type="GO" id="GO:0008270">
    <property type="term" value="F:zinc ion binding"/>
    <property type="evidence" value="ECO:0007669"/>
    <property type="project" value="UniProtKB-UniRule"/>
</dbReference>
<dbReference type="GO" id="GO:0019478">
    <property type="term" value="P:D-amino acid catabolic process"/>
    <property type="evidence" value="ECO:0007669"/>
    <property type="project" value="UniProtKB-UniRule"/>
</dbReference>
<dbReference type="Gene3D" id="3.40.50.10700">
    <property type="entry name" value="AF0625-like"/>
    <property type="match status" value="1"/>
</dbReference>
<dbReference type="Gene3D" id="3.40.630.50">
    <property type="entry name" value="AF0625-like"/>
    <property type="match status" value="1"/>
</dbReference>
<dbReference type="HAMAP" id="MF_00562">
    <property type="entry name" value="Deacylase_DtdA"/>
    <property type="match status" value="1"/>
</dbReference>
<dbReference type="InterPro" id="IPR018033">
    <property type="entry name" value="Deacylase_DtdA_archaea"/>
</dbReference>
<dbReference type="InterPro" id="IPR007508">
    <property type="entry name" value="DtdA"/>
</dbReference>
<dbReference type="NCBIfam" id="NF003070">
    <property type="entry name" value="PRK03995.1-1"/>
    <property type="match status" value="1"/>
</dbReference>
<dbReference type="PANTHER" id="PTHR34667">
    <property type="entry name" value="D-AMINOACYL-TRNA DEACYLASE"/>
    <property type="match status" value="1"/>
</dbReference>
<dbReference type="PANTHER" id="PTHR34667:SF1">
    <property type="entry name" value="D-AMINOACYL-TRNA DEACYLASE"/>
    <property type="match status" value="1"/>
</dbReference>
<dbReference type="Pfam" id="PF04414">
    <property type="entry name" value="tRNA_deacylase"/>
    <property type="match status" value="1"/>
</dbReference>
<dbReference type="PIRSF" id="PIRSF016210">
    <property type="entry name" value="UCP016210"/>
    <property type="match status" value="1"/>
</dbReference>
<dbReference type="SUPFAM" id="SSF142535">
    <property type="entry name" value="AF0625-like"/>
    <property type="match status" value="1"/>
</dbReference>
<accession>C3NJ84</accession>
<keyword id="KW-0378">Hydrolase</keyword>
<keyword id="KW-0479">Metal-binding</keyword>
<keyword id="KW-0862">Zinc</keyword>
<organism>
    <name type="scientific">Saccharolobus islandicus (strain Y.N.15.51 / Yellowstone #2)</name>
    <name type="common">Sulfolobus islandicus</name>
    <dbReference type="NCBI Taxonomy" id="419942"/>
    <lineage>
        <taxon>Archaea</taxon>
        <taxon>Thermoproteota</taxon>
        <taxon>Thermoprotei</taxon>
        <taxon>Sulfolobales</taxon>
        <taxon>Sulfolobaceae</taxon>
        <taxon>Saccharolobus</taxon>
    </lineage>
</organism>
<feature type="chain" id="PRO_1000212048" description="D-aminoacyl-tRNA deacylase">
    <location>
        <begin position="1"/>
        <end position="237"/>
    </location>
</feature>
<gene>
    <name evidence="1" type="primary">dtdA</name>
    <name type="ordered locus">YN1551_0052</name>
</gene>
<protein>
    <recommendedName>
        <fullName evidence="1">D-aminoacyl-tRNA deacylase</fullName>
        <ecNumber evidence="1">3.1.1.96</ecNumber>
    </recommendedName>
    <alternativeName>
        <fullName>D-tyrosyl-tRNA(Tyr) deacylase</fullName>
    </alternativeName>
</protein>
<reference key="1">
    <citation type="journal article" date="2009" name="Proc. Natl. Acad. Sci. U.S.A.">
        <title>Biogeography of the Sulfolobus islandicus pan-genome.</title>
        <authorList>
            <person name="Reno M.L."/>
            <person name="Held N.L."/>
            <person name="Fields C.J."/>
            <person name="Burke P.V."/>
            <person name="Whitaker R.J."/>
        </authorList>
    </citation>
    <scope>NUCLEOTIDE SEQUENCE [LARGE SCALE GENOMIC DNA]</scope>
    <source>
        <strain>Y.N.15.51 / Yellowstone #2</strain>
    </source>
</reference>
<name>DTDA_SACI1</name>
<evidence type="ECO:0000255" key="1">
    <source>
        <dbReference type="HAMAP-Rule" id="MF_00562"/>
    </source>
</evidence>
<sequence length="237" mass="26762">MDIKLVYSTSDPVGLTIKKLGYSFEEIDEDVTDFHYKNGEAIVIFSRHESKASIPSLTVHYPGNPSEEVMGGEPKKLGIAYPRLLTSILREIKKIDLDIEKTMEATHHGPTYQNVPVIFVEIGSDKTYWTNERIVRTLVDSTLKGIDKVDETDCRDYISGFGGPHYSKLFTKLADESCIGHVISKHYVDKLDDKVIIQAIANSVNNINKVVIDSLNLKQRERIIAALKSFDIHIQLR</sequence>
<proteinExistence type="inferred from homology"/>
<comment type="function">
    <text evidence="1">D-aminoacyl-tRNA deacylase with broad substrate specificity. By recycling D-aminoacyl-tRNA to D-amino acids and free tRNA molecules, this enzyme counteracts the toxicity associated with the formation of D-aminoacyl-tRNA entities in vivo.</text>
</comment>
<comment type="catalytic activity">
    <reaction evidence="1">
        <text>a D-aminoacyl-tRNA + H2O = a tRNA + a D-alpha-amino acid + H(+)</text>
        <dbReference type="Rhea" id="RHEA:13953"/>
        <dbReference type="Rhea" id="RHEA-COMP:10123"/>
        <dbReference type="Rhea" id="RHEA-COMP:10124"/>
        <dbReference type="ChEBI" id="CHEBI:15377"/>
        <dbReference type="ChEBI" id="CHEBI:15378"/>
        <dbReference type="ChEBI" id="CHEBI:59871"/>
        <dbReference type="ChEBI" id="CHEBI:78442"/>
        <dbReference type="ChEBI" id="CHEBI:79333"/>
        <dbReference type="EC" id="3.1.1.96"/>
    </reaction>
</comment>
<comment type="catalytic activity">
    <reaction evidence="1">
        <text>glycyl-tRNA(Ala) + H2O = tRNA(Ala) + glycine + H(+)</text>
        <dbReference type="Rhea" id="RHEA:53744"/>
        <dbReference type="Rhea" id="RHEA-COMP:9657"/>
        <dbReference type="Rhea" id="RHEA-COMP:13640"/>
        <dbReference type="ChEBI" id="CHEBI:15377"/>
        <dbReference type="ChEBI" id="CHEBI:15378"/>
        <dbReference type="ChEBI" id="CHEBI:57305"/>
        <dbReference type="ChEBI" id="CHEBI:78442"/>
        <dbReference type="ChEBI" id="CHEBI:78522"/>
        <dbReference type="EC" id="3.1.1.96"/>
    </reaction>
</comment>
<comment type="cofactor">
    <cofactor evidence="1">
        <name>Zn(2+)</name>
        <dbReference type="ChEBI" id="CHEBI:29105"/>
    </cofactor>
    <text evidence="1">Binds 2 Zn(2+) ions per subunit.</text>
</comment>
<comment type="subunit">
    <text evidence="1">Monomer.</text>
</comment>
<comment type="similarity">
    <text evidence="1">Belongs to the DtdA deacylase family.</text>
</comment>